<gene>
    <name type="primary">AIM41</name>
    <name type="ORF">SCRG_01603</name>
</gene>
<protein>
    <recommendedName>
        <fullName>Altered inheritance of mitochondria protein 41, mitochondrial</fullName>
    </recommendedName>
</protein>
<comment type="subcellular location">
    <subcellularLocation>
        <location evidence="1">Mitochondrion</location>
    </subcellularLocation>
</comment>
<comment type="similarity">
    <text evidence="3">Belongs to the AIM41 family.</text>
</comment>
<accession>B3LJN9</accession>
<proteinExistence type="inferred from homology"/>
<organism>
    <name type="scientific">Saccharomyces cerevisiae (strain RM11-1a)</name>
    <name type="common">Baker's yeast</name>
    <dbReference type="NCBI Taxonomy" id="285006"/>
    <lineage>
        <taxon>Eukaryota</taxon>
        <taxon>Fungi</taxon>
        <taxon>Dikarya</taxon>
        <taxon>Ascomycota</taxon>
        <taxon>Saccharomycotina</taxon>
        <taxon>Saccharomycetes</taxon>
        <taxon>Saccharomycetales</taxon>
        <taxon>Saccharomycetaceae</taxon>
        <taxon>Saccharomyces</taxon>
    </lineage>
</organism>
<reference key="1">
    <citation type="submission" date="2005-03" db="EMBL/GenBank/DDBJ databases">
        <title>Annotation of the Saccharomyces cerevisiae RM11-1a genome.</title>
        <authorList>
            <consortium name="The Broad Institute Genome Sequencing Platform"/>
            <person name="Birren B.W."/>
            <person name="Lander E.S."/>
            <person name="Galagan J.E."/>
            <person name="Nusbaum C."/>
            <person name="Devon K."/>
            <person name="Cuomo C."/>
            <person name="Jaffe D.B."/>
            <person name="Butler J."/>
            <person name="Alvarez P."/>
            <person name="Gnerre S."/>
            <person name="Grabherr M."/>
            <person name="Kleber M."/>
            <person name="Mauceli E.W."/>
            <person name="Brockman W."/>
            <person name="MacCallum I.A."/>
            <person name="Rounsley S."/>
            <person name="Young S.K."/>
            <person name="LaButti K."/>
            <person name="Pushparaj V."/>
            <person name="DeCaprio D."/>
            <person name="Crawford M."/>
            <person name="Koehrsen M."/>
            <person name="Engels R."/>
            <person name="Montgomery P."/>
            <person name="Pearson M."/>
            <person name="Howarth C."/>
            <person name="Larson L."/>
            <person name="Luoma S."/>
            <person name="White J."/>
            <person name="O'Leary S."/>
            <person name="Kodira C.D."/>
            <person name="Zeng Q."/>
            <person name="Yandava C."/>
            <person name="Alvarado L."/>
            <person name="Pratt S."/>
            <person name="Kruglyak L."/>
        </authorList>
    </citation>
    <scope>NUCLEOTIDE SEQUENCE [LARGE SCALE GENOMIC DNA]</scope>
    <source>
        <strain>RM11-1a</strain>
    </source>
</reference>
<feature type="transit peptide" description="Mitochondrion" evidence="2">
    <location>
        <begin position="1"/>
        <end position="53"/>
    </location>
</feature>
<feature type="chain" id="PRO_0000399871" description="Altered inheritance of mitochondria protein 41, mitochondrial">
    <location>
        <begin position="54"/>
        <end position="185"/>
    </location>
</feature>
<sequence>MFRQSIRPLVSNRLTFIRYNSSPAYTAAVSLLKGDLKKAMIAKDEMKKTAIRNMLSAIKNKEIALKGKSADEYSLYDMYSKLISQRKDSINEFLANKRDDLVAKEQGEMDIIKKYMDQLPVSSELDIDQNVKKLLDALKTKAGEKKVQIKEIMGEIDWKSLPTEWKTSPTAIKNSIVKQFKEIFK</sequence>
<evidence type="ECO:0000250" key="1"/>
<evidence type="ECO:0000255" key="2"/>
<evidence type="ECO:0000305" key="3"/>
<keyword id="KW-0496">Mitochondrion</keyword>
<keyword id="KW-0809">Transit peptide</keyword>
<dbReference type="EMBL" id="CH408045">
    <property type="protein sequence ID" value="EDV10792.1"/>
    <property type="molecule type" value="Genomic_DNA"/>
</dbReference>
<dbReference type="SMR" id="B3LJN9"/>
<dbReference type="HOGENOM" id="CLU_123460_0_0_1"/>
<dbReference type="OrthoDB" id="4921at4893"/>
<dbReference type="Proteomes" id="UP000008335">
    <property type="component" value="Unassembled WGS sequence"/>
</dbReference>
<dbReference type="GO" id="GO:0005739">
    <property type="term" value="C:mitochondrion"/>
    <property type="evidence" value="ECO:0007669"/>
    <property type="project" value="UniProtKB-SubCell"/>
</dbReference>
<dbReference type="GO" id="GO:0016884">
    <property type="term" value="F:carbon-nitrogen ligase activity, with glutamine as amido-N-donor"/>
    <property type="evidence" value="ECO:0007669"/>
    <property type="project" value="InterPro"/>
</dbReference>
<dbReference type="FunFam" id="1.10.1510.10:FF:000002">
    <property type="entry name" value="Altered inheritance of mitochondria protein 41, mitochondrial"/>
    <property type="match status" value="1"/>
</dbReference>
<dbReference type="Gene3D" id="1.10.1510.10">
    <property type="entry name" value="Uncharacterised protein YqeY/AIM41 PF09424, N-terminal domain"/>
    <property type="match status" value="1"/>
</dbReference>
<dbReference type="InterPro" id="IPR003789">
    <property type="entry name" value="Asn/Gln_tRNA_amidoTrase-B-like"/>
</dbReference>
<dbReference type="InterPro" id="IPR019004">
    <property type="entry name" value="YqeY/Aim41"/>
</dbReference>
<dbReference type="InterPro" id="IPR042184">
    <property type="entry name" value="YqeY/Aim41_N"/>
</dbReference>
<dbReference type="PANTHER" id="PTHR28055">
    <property type="entry name" value="ALTERED INHERITANCE OF MITOCHONDRIA PROTEIN 41, MITOCHONDRIAL"/>
    <property type="match status" value="1"/>
</dbReference>
<dbReference type="PANTHER" id="PTHR28055:SF1">
    <property type="entry name" value="ALTERED INHERITANCE OF MITOCHONDRIA PROTEIN 41, MITOCHONDRIAL"/>
    <property type="match status" value="1"/>
</dbReference>
<dbReference type="Pfam" id="PF09424">
    <property type="entry name" value="YqeY"/>
    <property type="match status" value="1"/>
</dbReference>
<dbReference type="SUPFAM" id="SSF89095">
    <property type="entry name" value="GatB/YqeY motif"/>
    <property type="match status" value="1"/>
</dbReference>
<name>AIM41_YEAS1</name>